<dbReference type="EC" id="4.2.1.10" evidence="1"/>
<dbReference type="EMBL" id="CP000127">
    <property type="protein sequence ID" value="ABA57561.1"/>
    <property type="molecule type" value="Genomic_DNA"/>
</dbReference>
<dbReference type="RefSeq" id="WP_002811229.1">
    <property type="nucleotide sequence ID" value="NC_007484.1"/>
</dbReference>
<dbReference type="SMR" id="Q3JC85"/>
<dbReference type="STRING" id="323261.Noc_1053"/>
<dbReference type="KEGG" id="noc:Noc_1053"/>
<dbReference type="eggNOG" id="COG0757">
    <property type="taxonomic scope" value="Bacteria"/>
</dbReference>
<dbReference type="HOGENOM" id="CLU_090968_1_0_6"/>
<dbReference type="InParanoid" id="Q3JC85"/>
<dbReference type="UniPathway" id="UPA00053">
    <property type="reaction ID" value="UER00086"/>
</dbReference>
<dbReference type="Proteomes" id="UP000006838">
    <property type="component" value="Chromosome"/>
</dbReference>
<dbReference type="GO" id="GO:0003855">
    <property type="term" value="F:3-dehydroquinate dehydratase activity"/>
    <property type="evidence" value="ECO:0007669"/>
    <property type="project" value="UniProtKB-UniRule"/>
</dbReference>
<dbReference type="GO" id="GO:0008652">
    <property type="term" value="P:amino acid biosynthetic process"/>
    <property type="evidence" value="ECO:0007669"/>
    <property type="project" value="UniProtKB-KW"/>
</dbReference>
<dbReference type="GO" id="GO:0009073">
    <property type="term" value="P:aromatic amino acid family biosynthetic process"/>
    <property type="evidence" value="ECO:0007669"/>
    <property type="project" value="UniProtKB-KW"/>
</dbReference>
<dbReference type="GO" id="GO:0009423">
    <property type="term" value="P:chorismate biosynthetic process"/>
    <property type="evidence" value="ECO:0007669"/>
    <property type="project" value="UniProtKB-UniRule"/>
</dbReference>
<dbReference type="GO" id="GO:0019631">
    <property type="term" value="P:quinate catabolic process"/>
    <property type="evidence" value="ECO:0007669"/>
    <property type="project" value="TreeGrafter"/>
</dbReference>
<dbReference type="CDD" id="cd00466">
    <property type="entry name" value="DHQase_II"/>
    <property type="match status" value="1"/>
</dbReference>
<dbReference type="Gene3D" id="3.40.50.9100">
    <property type="entry name" value="Dehydroquinase, class II"/>
    <property type="match status" value="1"/>
</dbReference>
<dbReference type="HAMAP" id="MF_00169">
    <property type="entry name" value="AroQ"/>
    <property type="match status" value="1"/>
</dbReference>
<dbReference type="InterPro" id="IPR001874">
    <property type="entry name" value="DHquinase_II"/>
</dbReference>
<dbReference type="InterPro" id="IPR018509">
    <property type="entry name" value="DHquinase_II_CS"/>
</dbReference>
<dbReference type="InterPro" id="IPR036441">
    <property type="entry name" value="DHquinase_II_sf"/>
</dbReference>
<dbReference type="NCBIfam" id="TIGR01088">
    <property type="entry name" value="aroQ"/>
    <property type="match status" value="1"/>
</dbReference>
<dbReference type="NCBIfam" id="NF003804">
    <property type="entry name" value="PRK05395.1-1"/>
    <property type="match status" value="1"/>
</dbReference>
<dbReference type="NCBIfam" id="NF003805">
    <property type="entry name" value="PRK05395.1-2"/>
    <property type="match status" value="1"/>
</dbReference>
<dbReference type="NCBIfam" id="NF003806">
    <property type="entry name" value="PRK05395.1-3"/>
    <property type="match status" value="1"/>
</dbReference>
<dbReference type="NCBIfam" id="NF003807">
    <property type="entry name" value="PRK05395.1-4"/>
    <property type="match status" value="1"/>
</dbReference>
<dbReference type="PANTHER" id="PTHR21272">
    <property type="entry name" value="CATABOLIC 3-DEHYDROQUINASE"/>
    <property type="match status" value="1"/>
</dbReference>
<dbReference type="PANTHER" id="PTHR21272:SF3">
    <property type="entry name" value="CATABOLIC 3-DEHYDROQUINASE"/>
    <property type="match status" value="1"/>
</dbReference>
<dbReference type="Pfam" id="PF01220">
    <property type="entry name" value="DHquinase_II"/>
    <property type="match status" value="1"/>
</dbReference>
<dbReference type="PIRSF" id="PIRSF001399">
    <property type="entry name" value="DHquinase_II"/>
    <property type="match status" value="1"/>
</dbReference>
<dbReference type="SUPFAM" id="SSF52304">
    <property type="entry name" value="Type II 3-dehydroquinate dehydratase"/>
    <property type="match status" value="1"/>
</dbReference>
<dbReference type="PROSITE" id="PS01029">
    <property type="entry name" value="DEHYDROQUINASE_II"/>
    <property type="match status" value="1"/>
</dbReference>
<accession>Q3JC85</accession>
<reference key="1">
    <citation type="journal article" date="2006" name="Appl. Environ. Microbiol.">
        <title>Complete genome sequence of the marine, chemolithoautotrophic, ammonia-oxidizing bacterium Nitrosococcus oceani ATCC 19707.</title>
        <authorList>
            <person name="Klotz M.G."/>
            <person name="Arp D.J."/>
            <person name="Chain P.S.G."/>
            <person name="El-Sheikh A.F."/>
            <person name="Hauser L.J."/>
            <person name="Hommes N.G."/>
            <person name="Larimer F.W."/>
            <person name="Malfatti S.A."/>
            <person name="Norton J.M."/>
            <person name="Poret-Peterson A.T."/>
            <person name="Vergez L.M."/>
            <person name="Ward B.B."/>
        </authorList>
    </citation>
    <scope>NUCLEOTIDE SEQUENCE [LARGE SCALE GENOMIC DNA]</scope>
    <source>
        <strain>ATCC 19707 / BCRC 17464 / JCM 30415 / NCIMB 11848 / C-107</strain>
    </source>
</reference>
<protein>
    <recommendedName>
        <fullName evidence="1">3-dehydroquinate dehydratase</fullName>
        <shortName evidence="1">3-dehydroquinase</shortName>
        <ecNumber evidence="1">4.2.1.10</ecNumber>
    </recommendedName>
    <alternativeName>
        <fullName evidence="1">Type II DHQase</fullName>
    </alternativeName>
</protein>
<sequence length="147" mass="16045">MANLLVIHGPNLNLLGTREPKYYGSITLEAINSNLTHQAAQAGHHLTCFQANAEHILIEQIHSAAHQDIAFIIINPAAFTHTSIALRDALAAVAIPFIEVHLSNVHRREAFRRHSYFSDIAEGVISGLGPTGYELALQAVFARLLPP</sequence>
<evidence type="ECO:0000255" key="1">
    <source>
        <dbReference type="HAMAP-Rule" id="MF_00169"/>
    </source>
</evidence>
<organism>
    <name type="scientific">Nitrosococcus oceani (strain ATCC 19707 / BCRC 17464 / JCM 30415 / NCIMB 11848 / C-107)</name>
    <dbReference type="NCBI Taxonomy" id="323261"/>
    <lineage>
        <taxon>Bacteria</taxon>
        <taxon>Pseudomonadati</taxon>
        <taxon>Pseudomonadota</taxon>
        <taxon>Gammaproteobacteria</taxon>
        <taxon>Chromatiales</taxon>
        <taxon>Chromatiaceae</taxon>
        <taxon>Nitrosococcus</taxon>
    </lineage>
</organism>
<gene>
    <name evidence="1" type="primary">aroQ</name>
    <name type="ordered locus">Noc_1053</name>
</gene>
<feature type="chain" id="PRO_1000077050" description="3-dehydroquinate dehydratase">
    <location>
        <begin position="1"/>
        <end position="147"/>
    </location>
</feature>
<feature type="active site" description="Proton acceptor" evidence="1">
    <location>
        <position position="23"/>
    </location>
</feature>
<feature type="active site" description="Proton donor" evidence="1">
    <location>
        <position position="101"/>
    </location>
</feature>
<feature type="binding site" evidence="1">
    <location>
        <position position="75"/>
    </location>
    <ligand>
        <name>substrate</name>
    </ligand>
</feature>
<feature type="binding site" evidence="1">
    <location>
        <position position="81"/>
    </location>
    <ligand>
        <name>substrate</name>
    </ligand>
</feature>
<feature type="binding site" evidence="1">
    <location>
        <position position="88"/>
    </location>
    <ligand>
        <name>substrate</name>
    </ligand>
</feature>
<feature type="binding site" evidence="1">
    <location>
        <begin position="102"/>
        <end position="103"/>
    </location>
    <ligand>
        <name>substrate</name>
    </ligand>
</feature>
<feature type="binding site" evidence="1">
    <location>
        <position position="112"/>
    </location>
    <ligand>
        <name>substrate</name>
    </ligand>
</feature>
<feature type="site" description="Transition state stabilizer" evidence="1">
    <location>
        <position position="18"/>
    </location>
</feature>
<keyword id="KW-0028">Amino-acid biosynthesis</keyword>
<keyword id="KW-0057">Aromatic amino acid biosynthesis</keyword>
<keyword id="KW-0456">Lyase</keyword>
<keyword id="KW-1185">Reference proteome</keyword>
<comment type="function">
    <text evidence="1">Catalyzes a trans-dehydration via an enolate intermediate.</text>
</comment>
<comment type="catalytic activity">
    <reaction evidence="1">
        <text>3-dehydroquinate = 3-dehydroshikimate + H2O</text>
        <dbReference type="Rhea" id="RHEA:21096"/>
        <dbReference type="ChEBI" id="CHEBI:15377"/>
        <dbReference type="ChEBI" id="CHEBI:16630"/>
        <dbReference type="ChEBI" id="CHEBI:32364"/>
        <dbReference type="EC" id="4.2.1.10"/>
    </reaction>
</comment>
<comment type="pathway">
    <text evidence="1">Metabolic intermediate biosynthesis; chorismate biosynthesis; chorismate from D-erythrose 4-phosphate and phosphoenolpyruvate: step 3/7.</text>
</comment>
<comment type="subunit">
    <text evidence="1">Homododecamer.</text>
</comment>
<comment type="similarity">
    <text evidence="1">Belongs to the type-II 3-dehydroquinase family.</text>
</comment>
<name>AROQ_NITOC</name>
<proteinExistence type="inferred from homology"/>